<keyword id="KW-0010">Activator</keyword>
<keyword id="KW-0426">Late protein</keyword>
<keyword id="KW-1185">Reference proteome</keyword>
<keyword id="KW-0804">Transcription</keyword>
<keyword id="KW-0805">Transcription regulation</keyword>
<comment type="function">
    <text evidence="1">Associates with RNA polymerase to initiate transcription from late gene promoters.</text>
</comment>
<comment type="subunit">
    <text evidence="1">Interacts with the late transcription factors VLTF-2 and VLTF-3. Interacts with the late transcription elongation factor VLTF-4. Interacts with itself.</text>
</comment>
<comment type="induction">
    <text>Expressed in the intermediate phase of the viral replicative cycle.</text>
</comment>
<comment type="similarity">
    <text evidence="2">Belongs to the chordopoxvirinae VLTF-1 family.</text>
</comment>
<proteinExistence type="evidence at transcript level"/>
<dbReference type="EMBL" id="M35027">
    <property type="protein sequence ID" value="AAA48074.1"/>
    <property type="molecule type" value="Genomic_DNA"/>
</dbReference>
<dbReference type="PIR" id="A35347">
    <property type="entry name" value="A35347"/>
</dbReference>
<dbReference type="Proteomes" id="UP000008269">
    <property type="component" value="Segment"/>
</dbReference>
<dbReference type="GO" id="GO:0006355">
    <property type="term" value="P:regulation of DNA-templated transcription"/>
    <property type="evidence" value="ECO:0007669"/>
    <property type="project" value="InterPro"/>
</dbReference>
<dbReference type="InterPro" id="IPR005022">
    <property type="entry name" value="Pox_TAP"/>
</dbReference>
<dbReference type="Pfam" id="PF03355">
    <property type="entry name" value="Pox_TAP"/>
    <property type="match status" value="1"/>
</dbReference>
<name>VLTF1_VACCC</name>
<organismHost>
    <name type="scientific">Homo sapiens</name>
    <name type="common">Human</name>
    <dbReference type="NCBI Taxonomy" id="9606"/>
</organismHost>
<feature type="chain" id="PRO_0000099166" description="Late transcription factor 1">
    <location>
        <begin position="1"/>
        <end position="260"/>
    </location>
</feature>
<accession>P68612</accession>
<accession>P21029</accession>
<reference key="1">
    <citation type="journal article" date="1990" name="Virology">
        <title>The complete DNA sequence of vaccinia virus.</title>
        <authorList>
            <person name="Goebel S.J."/>
            <person name="Johnson G.P."/>
            <person name="Perkus M.E."/>
            <person name="Davis S.W."/>
            <person name="Winslow J.P."/>
            <person name="Paoletti E."/>
        </authorList>
    </citation>
    <scope>NUCLEOTIDE SEQUENCE [LARGE SCALE GENOMIC DNA]</scope>
</reference>
<reference key="2">
    <citation type="journal article" date="1990" name="Virology">
        <title>Appendix to 'The complete DNA sequence of vaccinia virus'.</title>
        <authorList>
            <person name="Goebel S.J."/>
            <person name="Johnson G.P."/>
            <person name="Perkus M.E."/>
            <person name="Davis S.W."/>
            <person name="Winslow J.P."/>
            <person name="Paoletti E."/>
        </authorList>
    </citation>
    <scope>NUCLEOTIDE SEQUENCE [LARGE SCALE GENOMIC DNA]</scope>
</reference>
<evidence type="ECO:0000250" key="1">
    <source>
        <dbReference type="UniProtKB" id="P68613"/>
    </source>
</evidence>
<evidence type="ECO:0000305" key="2"/>
<gene>
    <name type="primary">OPG093</name>
    <name type="synonym">VLTF1</name>
    <name type="ORF">G8R</name>
</gene>
<organism>
    <name type="scientific">Vaccinia virus (strain Copenhagen)</name>
    <name type="common">VACV</name>
    <dbReference type="NCBI Taxonomy" id="10249"/>
    <lineage>
        <taxon>Viruses</taxon>
        <taxon>Varidnaviria</taxon>
        <taxon>Bamfordvirae</taxon>
        <taxon>Nucleocytoviricota</taxon>
        <taxon>Pokkesviricetes</taxon>
        <taxon>Chitovirales</taxon>
        <taxon>Poxviridae</taxon>
        <taxon>Chordopoxvirinae</taxon>
        <taxon>Orthopoxvirus</taxon>
        <taxon>Vaccinia virus</taxon>
    </lineage>
</organism>
<sequence>MSIRIKIDKLRQIVAYFSEFSEEVSINVDSTDELMYIFAALGGSVNIWAIIPLSASVFYRGAENIVFNLPVSKVKSCLCSFHNDAIIDIEPDLENNLVKLSSYHVVSVDCNKELMPIRTDTTICLSIDQKKSYVFNFHKYEEKCCGRTVIHLEWLLGFIKCISQHQHLAIMFKDDNIIMKTPGNTDAFSREYSMTECSQELQKFSFKIAISSLNKLRGFKKRVNVFETRIVMDNDDNILGMLFSDRVQSFKINIFMAFLD</sequence>
<protein>
    <recommendedName>
        <fullName>Late transcription factor 1</fullName>
        <shortName>VLTF-1</shortName>
    </recommendedName>
    <alternativeName>
        <fullName>Trans-activator protein GK1</fullName>
    </alternativeName>
</protein>